<accession>A8A714</accession>
<gene>
    <name evidence="1" type="primary">kdgT</name>
    <name type="ordered locus">EcHS_A4140</name>
</gene>
<organism>
    <name type="scientific">Escherichia coli O9:H4 (strain HS)</name>
    <dbReference type="NCBI Taxonomy" id="331112"/>
    <lineage>
        <taxon>Bacteria</taxon>
        <taxon>Pseudomonadati</taxon>
        <taxon>Pseudomonadota</taxon>
        <taxon>Gammaproteobacteria</taxon>
        <taxon>Enterobacterales</taxon>
        <taxon>Enterobacteriaceae</taxon>
        <taxon>Escherichia</taxon>
    </lineage>
</organism>
<proteinExistence type="inferred from homology"/>
<keyword id="KW-0997">Cell inner membrane</keyword>
<keyword id="KW-1003">Cell membrane</keyword>
<keyword id="KW-0472">Membrane</keyword>
<keyword id="KW-0762">Sugar transport</keyword>
<keyword id="KW-0769">Symport</keyword>
<keyword id="KW-0812">Transmembrane</keyword>
<keyword id="KW-1133">Transmembrane helix</keyword>
<keyword id="KW-0813">Transport</keyword>
<protein>
    <recommendedName>
        <fullName evidence="1">2-keto-3-deoxygluconate permease</fullName>
        <shortName evidence="1">KDG permease</shortName>
    </recommendedName>
</protein>
<dbReference type="EMBL" id="CP000802">
    <property type="protein sequence ID" value="ABV08318.1"/>
    <property type="molecule type" value="Genomic_DNA"/>
</dbReference>
<dbReference type="RefSeq" id="WP_001166063.1">
    <property type="nucleotide sequence ID" value="NC_009800.1"/>
</dbReference>
<dbReference type="GeneID" id="75204583"/>
<dbReference type="KEGG" id="ecx:EcHS_A4140"/>
<dbReference type="HOGENOM" id="CLU_057476_0_1_6"/>
<dbReference type="GO" id="GO:0005886">
    <property type="term" value="C:plasma membrane"/>
    <property type="evidence" value="ECO:0007669"/>
    <property type="project" value="UniProtKB-SubCell"/>
</dbReference>
<dbReference type="GO" id="GO:0015649">
    <property type="term" value="F:2-keto-3-deoxygluconate:proton symporter activity"/>
    <property type="evidence" value="ECO:0007669"/>
    <property type="project" value="UniProtKB-UniRule"/>
</dbReference>
<dbReference type="HAMAP" id="MF_00070">
    <property type="entry name" value="KdgT"/>
    <property type="match status" value="1"/>
</dbReference>
<dbReference type="InterPro" id="IPR004684">
    <property type="entry name" value="2keto-3dGluconate_permease"/>
</dbReference>
<dbReference type="InterPro" id="IPR018395">
    <property type="entry name" value="2keto-3dGluconate_permease_sub"/>
</dbReference>
<dbReference type="NCBIfam" id="TIGR00793">
    <property type="entry name" value="kdgT"/>
    <property type="match status" value="1"/>
</dbReference>
<dbReference type="Pfam" id="PF03812">
    <property type="entry name" value="KdgT"/>
    <property type="match status" value="1"/>
</dbReference>
<comment type="function">
    <text evidence="1">Catalyzes the proton-dependent uptake of 2-keto-3-deoxygluconate (KDG) into the cell.</text>
</comment>
<comment type="catalytic activity">
    <reaction evidence="1">
        <text>2-dehydro-3-deoxy-D-gluconate(in) + H(+)(in) = 2-dehydro-3-deoxy-D-gluconate(out) + H(+)(out)</text>
        <dbReference type="Rhea" id="RHEA:29943"/>
        <dbReference type="ChEBI" id="CHEBI:15378"/>
        <dbReference type="ChEBI" id="CHEBI:57990"/>
    </reaction>
    <physiologicalReaction direction="right-to-left" evidence="1">
        <dbReference type="Rhea" id="RHEA:29945"/>
    </physiologicalReaction>
</comment>
<comment type="subcellular location">
    <subcellularLocation>
        <location evidence="1">Cell inner membrane</location>
        <topology evidence="1">Multi-pass membrane protein</topology>
    </subcellularLocation>
</comment>
<comment type="similarity">
    <text evidence="1">Belongs to the KdgT transporter family.</text>
</comment>
<feature type="chain" id="PRO_1000057466" description="2-keto-3-deoxygluconate permease">
    <location>
        <begin position="1"/>
        <end position="327"/>
    </location>
</feature>
<feature type="transmembrane region" description="Helical" evidence="1">
    <location>
        <begin position="10"/>
        <end position="30"/>
    </location>
</feature>
<feature type="transmembrane region" description="Helical" evidence="1">
    <location>
        <begin position="42"/>
        <end position="62"/>
    </location>
</feature>
<feature type="transmembrane region" description="Helical" evidence="1">
    <location>
        <begin position="73"/>
        <end position="93"/>
    </location>
</feature>
<feature type="transmembrane region" description="Helical" evidence="1">
    <location>
        <begin position="95"/>
        <end position="115"/>
    </location>
</feature>
<feature type="transmembrane region" description="Helical" evidence="1">
    <location>
        <begin position="139"/>
        <end position="159"/>
    </location>
</feature>
<feature type="transmembrane region" description="Helical" evidence="1">
    <location>
        <begin position="163"/>
        <end position="183"/>
    </location>
</feature>
<feature type="transmembrane region" description="Helical" evidence="1">
    <location>
        <begin position="199"/>
        <end position="219"/>
    </location>
</feature>
<feature type="transmembrane region" description="Helical" evidence="1">
    <location>
        <begin position="224"/>
        <end position="244"/>
    </location>
</feature>
<feature type="transmembrane region" description="Helical" evidence="1">
    <location>
        <begin position="254"/>
        <end position="274"/>
    </location>
</feature>
<feature type="transmembrane region" description="Helical" evidence="1">
    <location>
        <begin position="289"/>
        <end position="309"/>
    </location>
</feature>
<evidence type="ECO:0000255" key="1">
    <source>
        <dbReference type="HAMAP-Rule" id="MF_00070"/>
    </source>
</evidence>
<name>KDGT_ECOHS</name>
<sequence length="327" mass="33669">MQIKRSIEKIPGGMMLVPLFLGALCHTFSPGAGKYFGSFTNGMITGTVPILAVWFFCMGASIKLSATGTVLRKSGTLVVTKIAVAWVVAAIASRIIPEHGVEVGFFAGLSTLALVAAMDMTNGGLYASIMQQYGTKEEAGAFVLMSLESGPLMTMIILGTAGIASFEPHVFVGAVLPFLVGFALGNLDPELREFFSKAVQTLIPFFAFALGNTIDLTVIAQTGLLGILLGVAVIIVTGIPLIIADKLIGGGDGTAGIAASSSAGAAVATPVLIAEMVPAFKPMAPAATSLVATAVIVTSILVPILTSIWSRKVKARAAKIEILGTVK</sequence>
<reference key="1">
    <citation type="journal article" date="2008" name="J. Bacteriol.">
        <title>The pangenome structure of Escherichia coli: comparative genomic analysis of E. coli commensal and pathogenic isolates.</title>
        <authorList>
            <person name="Rasko D.A."/>
            <person name="Rosovitz M.J."/>
            <person name="Myers G.S.A."/>
            <person name="Mongodin E.F."/>
            <person name="Fricke W.F."/>
            <person name="Gajer P."/>
            <person name="Crabtree J."/>
            <person name="Sebaihia M."/>
            <person name="Thomson N.R."/>
            <person name="Chaudhuri R."/>
            <person name="Henderson I.R."/>
            <person name="Sperandio V."/>
            <person name="Ravel J."/>
        </authorList>
    </citation>
    <scope>NUCLEOTIDE SEQUENCE [LARGE SCALE GENOMIC DNA]</scope>
    <source>
        <strain>HS</strain>
    </source>
</reference>